<sequence>MDVNPTLLFLKVPAQNAISTTFPYTGDPPYSHGTGTGYTMDTVNRTHQYSEKGKWTTNTETGAPQLNPIDGPLPEDNEPSGYAQTDCVLEAMAFLEESHPGIFENSCLETMEVVQQTRVDKLTQGRQTYDWTLNRNQPAATALANTIEVFRSNGLTANESGRLIDFLKDVMESMDKEEIEITTHFQRKRRVRDNMTKKMVTQRTIGKKKQRVNKRSYLIRALTLNTMTKDAERGKLKRRAIATPGMQIRGFVYFVETLARSICEKLEQSGLPVGGNEKKAKLANVVRKMMTNSQDTELSFTITGDNTKWNENQNPRMFLAMITYITKNQPEWFRNILSIAPIMFSNKMARLGKGYMFESKRMKLRTQIPAEMLASIDLKYFNESTRKKIEKIRPLLIDGTASLSPGMMMGMFNMLSTVLGVSILNLGQKKYTKTTYWWDGLQSSDDFALIVNAPNHEGIQAGVDRFYRTCKLVGINMSKKKSYINKTGTFEFTSFFYRYGFVANFSMELPSFGVSGINESADMSIGVTVIKNNMINNDLGPATAQMALQLFIKDYRYTYRCHRGDTQIQTRRSFELKKLWEQTQSKAGLLVSDGGPNLYNIRNLHIPEVCLKWELMDEDYQGRLCNPLNPFVSHKEIESVNNAVVMPAHGPAKSMEYDAVATTHSWIPKRNRSILNTSQRGILEDEQMYQKCCNLFEKFFPSSSYRRPVGISSMVEAMVSRARIDARIDFESGRIKKEEFSEIMKICSTIEELRRQK</sequence>
<organismHost>
    <name type="scientific">Aves</name>
    <dbReference type="NCBI Taxonomy" id="8782"/>
</organismHost>
<organismHost>
    <name type="scientific">Cetacea</name>
    <name type="common">whales</name>
    <dbReference type="NCBI Taxonomy" id="9721"/>
</organismHost>
<organismHost>
    <name type="scientific">Homo sapiens</name>
    <name type="common">Human</name>
    <dbReference type="NCBI Taxonomy" id="9606"/>
</organismHost>
<organismHost>
    <name type="scientific">Phocidae</name>
    <name type="common">true seals</name>
    <dbReference type="NCBI Taxonomy" id="9709"/>
</organismHost>
<organismHost>
    <name type="scientific">Sus scrofa</name>
    <name type="common">Pig</name>
    <dbReference type="NCBI Taxonomy" id="9823"/>
</organismHost>
<feature type="chain" id="PRO_0000279600" description="RNA-directed RNA polymerase catalytic subunit">
    <location>
        <begin position="1"/>
        <end position="757"/>
    </location>
</feature>
<feature type="domain" description="RdRp catalytic" evidence="1">
    <location>
        <begin position="286"/>
        <end position="483"/>
    </location>
</feature>
<feature type="region of interest" description="Disordered" evidence="2">
    <location>
        <begin position="50"/>
        <end position="82"/>
    </location>
</feature>
<feature type="region of interest" description="Promoter-binding site" evidence="1">
    <location>
        <begin position="249"/>
        <end position="256"/>
    </location>
</feature>
<feature type="short sequence motif" description="Nuclear localization signal" evidence="1">
    <location>
        <begin position="187"/>
        <end position="195"/>
    </location>
</feature>
<feature type="short sequence motif" description="Nuclear localization signal" evidence="1">
    <location>
        <begin position="203"/>
        <end position="216"/>
    </location>
</feature>
<feature type="compositionally biased region" description="Polar residues" evidence="2">
    <location>
        <begin position="55"/>
        <end position="64"/>
    </location>
</feature>
<name>RDRP_I83A8</name>
<proteinExistence type="inferred from homology"/>
<comment type="function">
    <text evidence="1">RNA-dependent RNA polymerase which is responsible for replication and transcription of virus RNA segments. The transcription of viral mRNAs occurs by a unique mechanism called cap-snatching. 5' methylated caps of cellular mRNAs are cleaved after 10-13 nucleotides by PA. In turn, these short capped RNAs are used as primers by PB1 for transcription of viral mRNAs. During virus replication, PB1 initiates RNA synthesis and copy vRNA into complementary RNA (cRNA) which in turn serves as a template for the production of more vRNAs.</text>
</comment>
<comment type="catalytic activity">
    <reaction evidence="1">
        <text>RNA(n) + a ribonucleoside 5'-triphosphate = RNA(n+1) + diphosphate</text>
        <dbReference type="Rhea" id="RHEA:21248"/>
        <dbReference type="Rhea" id="RHEA-COMP:14527"/>
        <dbReference type="Rhea" id="RHEA-COMP:17342"/>
        <dbReference type="ChEBI" id="CHEBI:33019"/>
        <dbReference type="ChEBI" id="CHEBI:61557"/>
        <dbReference type="ChEBI" id="CHEBI:140395"/>
        <dbReference type="EC" id="2.7.7.48"/>
    </reaction>
</comment>
<comment type="subunit">
    <text evidence="1">Influenza RNA polymerase is composed of three subunits: PB1, PB2 and PA. Interacts (via N-terminus) with PA (via C-terminus). Interacts (via C-terminus) with PB2 (via N-terminus); this interaction is essential for transcription initiation.</text>
</comment>
<comment type="subcellular location">
    <subcellularLocation>
        <location evidence="1">Host nucleus</location>
    </subcellularLocation>
    <subcellularLocation>
        <location evidence="1">Host cytoplasm</location>
    </subcellularLocation>
</comment>
<comment type="PTM">
    <text evidence="1">Phosphorylated by host PRKCA.</text>
</comment>
<comment type="similarity">
    <text evidence="1">Belongs to the influenza viruses polymerase PB1 family.</text>
</comment>
<evidence type="ECO:0000255" key="1">
    <source>
        <dbReference type="HAMAP-Rule" id="MF_04065"/>
    </source>
</evidence>
<evidence type="ECO:0000256" key="2">
    <source>
        <dbReference type="SAM" id="MobiDB-lite"/>
    </source>
</evidence>
<keyword id="KW-1262">Eukaryotic host gene expression shutoff by virus</keyword>
<keyword id="KW-1191">Eukaryotic host transcription shutoff by virus</keyword>
<keyword id="KW-1035">Host cytoplasm</keyword>
<keyword id="KW-1190">Host gene expression shutoff by virus</keyword>
<keyword id="KW-1048">Host nucleus</keyword>
<keyword id="KW-0945">Host-virus interaction</keyword>
<keyword id="KW-1104">Inhibition of host RNA polymerase II by virus</keyword>
<keyword id="KW-0547">Nucleotide-binding</keyword>
<keyword id="KW-0548">Nucleotidyltransferase</keyword>
<keyword id="KW-0597">Phosphoprotein</keyword>
<keyword id="KW-0696">RNA-directed RNA polymerase</keyword>
<keyword id="KW-0808">Transferase</keyword>
<keyword id="KW-0693">Viral RNA replication</keyword>
<keyword id="KW-1195">Viral transcription</keyword>
<dbReference type="EC" id="2.7.7.48" evidence="1"/>
<dbReference type="EMBL" id="CY003742">
    <property type="protein sequence ID" value="ABB04947.1"/>
    <property type="molecule type" value="Genomic_RNA"/>
</dbReference>
<dbReference type="SMR" id="Q38SQ0"/>
<dbReference type="Proteomes" id="UP000167548">
    <property type="component" value="Genome"/>
</dbReference>
<dbReference type="GO" id="GO:0030430">
    <property type="term" value="C:host cell cytoplasm"/>
    <property type="evidence" value="ECO:0007669"/>
    <property type="project" value="UniProtKB-SubCell"/>
</dbReference>
<dbReference type="GO" id="GO:0042025">
    <property type="term" value="C:host cell nucleus"/>
    <property type="evidence" value="ECO:0007669"/>
    <property type="project" value="UniProtKB-SubCell"/>
</dbReference>
<dbReference type="GO" id="GO:0000166">
    <property type="term" value="F:nucleotide binding"/>
    <property type="evidence" value="ECO:0007669"/>
    <property type="project" value="UniProtKB-UniRule"/>
</dbReference>
<dbReference type="GO" id="GO:0003723">
    <property type="term" value="F:RNA binding"/>
    <property type="evidence" value="ECO:0007669"/>
    <property type="project" value="InterPro"/>
</dbReference>
<dbReference type="GO" id="GO:0003968">
    <property type="term" value="F:RNA-directed RNA polymerase activity"/>
    <property type="evidence" value="ECO:0007669"/>
    <property type="project" value="UniProtKB-UniRule"/>
</dbReference>
<dbReference type="GO" id="GO:0006351">
    <property type="term" value="P:DNA-templated transcription"/>
    <property type="evidence" value="ECO:0007669"/>
    <property type="project" value="UniProtKB-UniRule"/>
</dbReference>
<dbReference type="GO" id="GO:0039657">
    <property type="term" value="P:symbiont-mediated suppression of host gene expression"/>
    <property type="evidence" value="ECO:0007669"/>
    <property type="project" value="UniProtKB-KW"/>
</dbReference>
<dbReference type="GO" id="GO:0039523">
    <property type="term" value="P:symbiont-mediated suppression of host mRNA transcription via inhibition of RNA polymerase II activity"/>
    <property type="evidence" value="ECO:0007669"/>
    <property type="project" value="UniProtKB-UniRule"/>
</dbReference>
<dbReference type="GO" id="GO:0039694">
    <property type="term" value="P:viral RNA genome replication"/>
    <property type="evidence" value="ECO:0007669"/>
    <property type="project" value="UniProtKB-UniRule"/>
</dbReference>
<dbReference type="GO" id="GO:0019083">
    <property type="term" value="P:viral transcription"/>
    <property type="evidence" value="ECO:0007669"/>
    <property type="project" value="UniProtKB-KW"/>
</dbReference>
<dbReference type="Gene3D" id="6.10.140.720">
    <property type="match status" value="1"/>
</dbReference>
<dbReference type="HAMAP" id="MF_04065">
    <property type="entry name" value="INFV_RDRP"/>
    <property type="match status" value="1"/>
</dbReference>
<dbReference type="InterPro" id="IPR007099">
    <property type="entry name" value="RNA-dir_pol_NSvirus"/>
</dbReference>
<dbReference type="InterPro" id="IPR001407">
    <property type="entry name" value="RNA_pol_PB1_influenza"/>
</dbReference>
<dbReference type="Pfam" id="PF00602">
    <property type="entry name" value="Flu_PB1"/>
    <property type="match status" value="1"/>
</dbReference>
<dbReference type="PIRSF" id="PIRSF000827">
    <property type="entry name" value="RdRPol_OMV"/>
    <property type="match status" value="1"/>
</dbReference>
<dbReference type="PROSITE" id="PS50525">
    <property type="entry name" value="RDRP_SSRNA_NEG_SEG"/>
    <property type="match status" value="1"/>
</dbReference>
<accession>Q38SQ0</accession>
<reference key="1">
    <citation type="submission" date="2005-10" db="EMBL/GenBank/DDBJ databases">
        <title>The NIAID influenza genome sequencing project.</title>
        <authorList>
            <person name="Ghedin E."/>
            <person name="Spiro D."/>
            <person name="Miller N."/>
            <person name="Zaborsky J."/>
            <person name="Feldblyum T."/>
            <person name="Subbu V."/>
            <person name="Shumway M."/>
            <person name="Sparenborg J."/>
            <person name="Groveman L."/>
            <person name="Halpin R."/>
            <person name="Sitz J."/>
            <person name="Koo H."/>
            <person name="Salzberg S.L."/>
            <person name="Webster R.G."/>
            <person name="Hoffmann E."/>
            <person name="Krauss S."/>
            <person name="Naeve C."/>
            <person name="Bao Y."/>
            <person name="Bolotov P."/>
            <person name="Dernovoy D."/>
            <person name="Kiryutin B."/>
            <person name="Lipman D.J."/>
            <person name="Tatusova T."/>
        </authorList>
    </citation>
    <scope>NUCLEOTIDE SEQUENCE [GENOMIC RNA]</scope>
</reference>
<gene>
    <name evidence="1" type="primary">PB1</name>
</gene>
<protein>
    <recommendedName>
        <fullName evidence="1">RNA-directed RNA polymerase catalytic subunit</fullName>
        <ecNumber evidence="1">2.7.7.48</ecNumber>
    </recommendedName>
    <alternativeName>
        <fullName evidence="1">Polymerase basic protein 1</fullName>
        <shortName evidence="1">PB1</shortName>
    </alternativeName>
    <alternativeName>
        <fullName evidence="1">RNA-directed RNA polymerase subunit P1</fullName>
    </alternativeName>
</protein>
<organism>
    <name type="scientific">Influenza A virus (strain A/Hong Kong/5/1983 H3N2)</name>
    <dbReference type="NCBI Taxonomy" id="387159"/>
    <lineage>
        <taxon>Viruses</taxon>
        <taxon>Riboviria</taxon>
        <taxon>Orthornavirae</taxon>
        <taxon>Negarnaviricota</taxon>
        <taxon>Polyploviricotina</taxon>
        <taxon>Insthoviricetes</taxon>
        <taxon>Articulavirales</taxon>
        <taxon>Orthomyxoviridae</taxon>
        <taxon>Alphainfluenzavirus</taxon>
        <taxon>Alphainfluenzavirus influenzae</taxon>
        <taxon>Influenza A virus</taxon>
    </lineage>
</organism>